<organism>
    <name type="scientific">Oceanobacillus iheyensis (strain DSM 14371 / CIP 107618 / JCM 11309 / KCTC 3954 / HTE831)</name>
    <dbReference type="NCBI Taxonomy" id="221109"/>
    <lineage>
        <taxon>Bacteria</taxon>
        <taxon>Bacillati</taxon>
        <taxon>Bacillota</taxon>
        <taxon>Bacilli</taxon>
        <taxon>Bacillales</taxon>
        <taxon>Bacillaceae</taxon>
        <taxon>Oceanobacillus</taxon>
    </lineage>
</organism>
<comment type="function">
    <text evidence="1">Catalyzes the phosphorylation of the hydroxyl group of 4-methyl-5-beta-hydroxyethylthiazole (THZ).</text>
</comment>
<comment type="catalytic activity">
    <reaction evidence="1">
        <text>5-(2-hydroxyethyl)-4-methylthiazole + ATP = 4-methyl-5-(2-phosphooxyethyl)-thiazole + ADP + H(+)</text>
        <dbReference type="Rhea" id="RHEA:24212"/>
        <dbReference type="ChEBI" id="CHEBI:15378"/>
        <dbReference type="ChEBI" id="CHEBI:17957"/>
        <dbReference type="ChEBI" id="CHEBI:30616"/>
        <dbReference type="ChEBI" id="CHEBI:58296"/>
        <dbReference type="ChEBI" id="CHEBI:456216"/>
        <dbReference type="EC" id="2.7.1.50"/>
    </reaction>
</comment>
<comment type="cofactor">
    <cofactor evidence="1">
        <name>Mg(2+)</name>
        <dbReference type="ChEBI" id="CHEBI:18420"/>
    </cofactor>
</comment>
<comment type="pathway">
    <text evidence="1">Cofactor biosynthesis; thiamine diphosphate biosynthesis; 4-methyl-5-(2-phosphoethyl)-thiazole from 5-(2-hydroxyethyl)-4-methylthiazole: step 1/1.</text>
</comment>
<comment type="similarity">
    <text evidence="1">Belongs to the Thz kinase family.</text>
</comment>
<feature type="chain" id="PRO_0000156946" description="Hydroxyethylthiazole kinase 1">
    <location>
        <begin position="1"/>
        <end position="257"/>
    </location>
</feature>
<feature type="binding site" evidence="1">
    <location>
        <position position="41"/>
    </location>
    <ligand>
        <name>substrate</name>
    </ligand>
</feature>
<feature type="binding site" evidence="1">
    <location>
        <position position="117"/>
    </location>
    <ligand>
        <name>ATP</name>
        <dbReference type="ChEBI" id="CHEBI:30616"/>
    </ligand>
</feature>
<feature type="binding site" evidence="1">
    <location>
        <position position="162"/>
    </location>
    <ligand>
        <name>ATP</name>
        <dbReference type="ChEBI" id="CHEBI:30616"/>
    </ligand>
</feature>
<feature type="binding site" evidence="1">
    <location>
        <position position="189"/>
    </location>
    <ligand>
        <name>substrate</name>
    </ligand>
</feature>
<proteinExistence type="inferred from homology"/>
<reference key="1">
    <citation type="journal article" date="2002" name="Nucleic Acids Res.">
        <title>Genome sequence of Oceanobacillus iheyensis isolated from the Iheya Ridge and its unexpected adaptive capabilities to extreme environments.</title>
        <authorList>
            <person name="Takami H."/>
            <person name="Takaki Y."/>
            <person name="Uchiyama I."/>
        </authorList>
    </citation>
    <scope>NUCLEOTIDE SEQUENCE [LARGE SCALE GENOMIC DNA]</scope>
    <source>
        <strain>DSM 14371 / CIP 107618 / JCM 11309 / KCTC 3954 / HTE831</strain>
    </source>
</reference>
<gene>
    <name evidence="1" type="primary">thiM1</name>
    <name type="ordered locus">OB0473</name>
</gene>
<protein>
    <recommendedName>
        <fullName evidence="1">Hydroxyethylthiazole kinase 1</fullName>
        <ecNumber evidence="1">2.7.1.50</ecNumber>
    </recommendedName>
    <alternativeName>
        <fullName evidence="1">4-methyl-5-beta-hydroxyethylthiazole kinase 1</fullName>
        <shortName evidence="1">TH kinase 1</shortName>
        <shortName evidence="1">Thz kinase 1</shortName>
    </alternativeName>
</protein>
<accession>Q8ESZ2</accession>
<dbReference type="EC" id="2.7.1.50" evidence="1"/>
<dbReference type="EMBL" id="BA000028">
    <property type="protein sequence ID" value="BAC12429.1"/>
    <property type="molecule type" value="Genomic_DNA"/>
</dbReference>
<dbReference type="RefSeq" id="WP_011064879.1">
    <property type="nucleotide sequence ID" value="NC_004193.1"/>
</dbReference>
<dbReference type="SMR" id="Q8ESZ2"/>
<dbReference type="STRING" id="221109.gene:10732676"/>
<dbReference type="KEGG" id="oih:OB0473"/>
<dbReference type="eggNOG" id="COG2145">
    <property type="taxonomic scope" value="Bacteria"/>
</dbReference>
<dbReference type="HOGENOM" id="CLU_019943_0_0_9"/>
<dbReference type="OrthoDB" id="9778146at2"/>
<dbReference type="PhylomeDB" id="Q8ESZ2"/>
<dbReference type="UniPathway" id="UPA00060">
    <property type="reaction ID" value="UER00139"/>
</dbReference>
<dbReference type="Proteomes" id="UP000000822">
    <property type="component" value="Chromosome"/>
</dbReference>
<dbReference type="GO" id="GO:0005829">
    <property type="term" value="C:cytosol"/>
    <property type="evidence" value="ECO:0007669"/>
    <property type="project" value="TreeGrafter"/>
</dbReference>
<dbReference type="GO" id="GO:0005524">
    <property type="term" value="F:ATP binding"/>
    <property type="evidence" value="ECO:0007669"/>
    <property type="project" value="UniProtKB-UniRule"/>
</dbReference>
<dbReference type="GO" id="GO:0004417">
    <property type="term" value="F:hydroxyethylthiazole kinase activity"/>
    <property type="evidence" value="ECO:0007669"/>
    <property type="project" value="UniProtKB-UniRule"/>
</dbReference>
<dbReference type="GO" id="GO:0008902">
    <property type="term" value="F:hydroxymethylpyrimidine kinase activity"/>
    <property type="evidence" value="ECO:0007669"/>
    <property type="project" value="TreeGrafter"/>
</dbReference>
<dbReference type="GO" id="GO:0000287">
    <property type="term" value="F:magnesium ion binding"/>
    <property type="evidence" value="ECO:0007669"/>
    <property type="project" value="UniProtKB-UniRule"/>
</dbReference>
<dbReference type="GO" id="GO:0008972">
    <property type="term" value="F:phosphomethylpyrimidine kinase activity"/>
    <property type="evidence" value="ECO:0007669"/>
    <property type="project" value="TreeGrafter"/>
</dbReference>
<dbReference type="GO" id="GO:0009228">
    <property type="term" value="P:thiamine biosynthetic process"/>
    <property type="evidence" value="ECO:0007669"/>
    <property type="project" value="UniProtKB-KW"/>
</dbReference>
<dbReference type="GO" id="GO:0009229">
    <property type="term" value="P:thiamine diphosphate biosynthetic process"/>
    <property type="evidence" value="ECO:0007669"/>
    <property type="project" value="UniProtKB-UniRule"/>
</dbReference>
<dbReference type="CDD" id="cd01170">
    <property type="entry name" value="THZ_kinase"/>
    <property type="match status" value="1"/>
</dbReference>
<dbReference type="Gene3D" id="3.40.1190.20">
    <property type="match status" value="1"/>
</dbReference>
<dbReference type="HAMAP" id="MF_00228">
    <property type="entry name" value="Thz_kinase"/>
    <property type="match status" value="1"/>
</dbReference>
<dbReference type="InterPro" id="IPR000417">
    <property type="entry name" value="Hyethyz_kinase"/>
</dbReference>
<dbReference type="InterPro" id="IPR029056">
    <property type="entry name" value="Ribokinase-like"/>
</dbReference>
<dbReference type="NCBIfam" id="NF006830">
    <property type="entry name" value="PRK09355.1"/>
    <property type="match status" value="1"/>
</dbReference>
<dbReference type="NCBIfam" id="TIGR00694">
    <property type="entry name" value="thiM"/>
    <property type="match status" value="1"/>
</dbReference>
<dbReference type="PANTHER" id="PTHR20858:SF17">
    <property type="entry name" value="HYDROXYMETHYLPYRIMIDINE_PHOSPHOMETHYLPYRIMIDINE KINASE THI20-RELATED"/>
    <property type="match status" value="1"/>
</dbReference>
<dbReference type="PANTHER" id="PTHR20858">
    <property type="entry name" value="PHOSPHOMETHYLPYRIMIDINE KINASE"/>
    <property type="match status" value="1"/>
</dbReference>
<dbReference type="Pfam" id="PF02110">
    <property type="entry name" value="HK"/>
    <property type="match status" value="1"/>
</dbReference>
<dbReference type="PIRSF" id="PIRSF000513">
    <property type="entry name" value="Thz_kinase"/>
    <property type="match status" value="1"/>
</dbReference>
<dbReference type="PRINTS" id="PR01099">
    <property type="entry name" value="HYETHTZKNASE"/>
</dbReference>
<dbReference type="SUPFAM" id="SSF53613">
    <property type="entry name" value="Ribokinase-like"/>
    <property type="match status" value="1"/>
</dbReference>
<keyword id="KW-0067">ATP-binding</keyword>
<keyword id="KW-0418">Kinase</keyword>
<keyword id="KW-0460">Magnesium</keyword>
<keyword id="KW-0479">Metal-binding</keyword>
<keyword id="KW-0547">Nucleotide-binding</keyword>
<keyword id="KW-1185">Reference proteome</keyword>
<keyword id="KW-0784">Thiamine biosynthesis</keyword>
<keyword id="KW-0808">Transferase</keyword>
<evidence type="ECO:0000255" key="1">
    <source>
        <dbReference type="HAMAP-Rule" id="MF_00228"/>
    </source>
</evidence>
<name>THIM1_OCEIH</name>
<sequence>MQVDIIKQVRDTKPLVHHLTNQVVMNFSANGLLSFGGSPIMAKAIEEVEQIAAISNAVLINIGTLTSTELESMIAAGKTANKHNIPVLLDPVGVAATSFRRNAIDKILEEVRPTVIKGNAGELASLVNINLEAKGVDSIGDGNLDVIAQKVSEKYNTAVVVTGETDVIYVDNHLIHNGTGHHYLSSITGSGCLLGSIIAACLTTKSTLKDQLMTAVSFYGLSASYAANQENVHGTGSFLPVFIDSLSKMPQELTEGE</sequence>